<protein>
    <recommendedName>
        <fullName evidence="1">Tyrosine phenol-lyase</fullName>
        <ecNumber evidence="1">4.1.99.2</ecNumber>
    </recommendedName>
    <alternativeName>
        <fullName evidence="1">Beta-tyrosinase</fullName>
    </alternativeName>
</protein>
<gene>
    <name evidence="1" type="primary">tpl</name>
    <name type="ordered locus">FN1988</name>
</gene>
<dbReference type="EC" id="4.1.99.2" evidence="1"/>
<dbReference type="EMBL" id="AE009951">
    <property type="protein sequence ID" value="AAL94078.1"/>
    <property type="molecule type" value="Genomic_DNA"/>
</dbReference>
<dbReference type="RefSeq" id="NP_602779.1">
    <property type="nucleotide sequence ID" value="NC_003454.1"/>
</dbReference>
<dbReference type="RefSeq" id="WP_011015962.1">
    <property type="nucleotide sequence ID" value="NZ_OZ209243.1"/>
</dbReference>
<dbReference type="SMR" id="Q8RHM6"/>
<dbReference type="STRING" id="190304.FN1988"/>
<dbReference type="PaxDb" id="190304-FN1988"/>
<dbReference type="EnsemblBacteria" id="AAL94078">
    <property type="protein sequence ID" value="AAL94078"/>
    <property type="gene ID" value="FN1988"/>
</dbReference>
<dbReference type="KEGG" id="fnu:FN1988"/>
<dbReference type="PATRIC" id="fig|190304.8.peg.456"/>
<dbReference type="eggNOG" id="COG3033">
    <property type="taxonomic scope" value="Bacteria"/>
</dbReference>
<dbReference type="HOGENOM" id="CLU_047223_0_0_0"/>
<dbReference type="InParanoid" id="Q8RHM6"/>
<dbReference type="BioCyc" id="FNUC190304:G1FZS-478-MONOMER"/>
<dbReference type="BRENDA" id="4.1.99.2">
    <property type="organism ID" value="11865"/>
</dbReference>
<dbReference type="Proteomes" id="UP000002521">
    <property type="component" value="Chromosome"/>
</dbReference>
<dbReference type="GO" id="GO:0016829">
    <property type="term" value="F:lyase activity"/>
    <property type="evidence" value="ECO:0000318"/>
    <property type="project" value="GO_Central"/>
</dbReference>
<dbReference type="GO" id="GO:0050371">
    <property type="term" value="F:tyrosine phenol-lyase activity"/>
    <property type="evidence" value="ECO:0007669"/>
    <property type="project" value="UniProtKB-UniRule"/>
</dbReference>
<dbReference type="GO" id="GO:0006570">
    <property type="term" value="P:tyrosine metabolic process"/>
    <property type="evidence" value="ECO:0007669"/>
    <property type="project" value="InterPro"/>
</dbReference>
<dbReference type="CDD" id="cd00617">
    <property type="entry name" value="Tnase_like"/>
    <property type="match status" value="1"/>
</dbReference>
<dbReference type="Gene3D" id="3.90.1150.10">
    <property type="entry name" value="Aspartate Aminotransferase, domain 1"/>
    <property type="match status" value="1"/>
</dbReference>
<dbReference type="Gene3D" id="3.40.640.10">
    <property type="entry name" value="Type I PLP-dependent aspartate aminotransferase-like (Major domain)"/>
    <property type="match status" value="1"/>
</dbReference>
<dbReference type="HAMAP" id="MF_00543">
    <property type="entry name" value="Tyr_phenol_lyase"/>
    <property type="match status" value="1"/>
</dbReference>
<dbReference type="InterPro" id="IPR001597">
    <property type="entry name" value="ArAA_b-elim_lyase/Thr_aldolase"/>
</dbReference>
<dbReference type="InterPro" id="IPR011166">
    <property type="entry name" value="Beta-eliminating_lyase"/>
</dbReference>
<dbReference type="InterPro" id="IPR015424">
    <property type="entry name" value="PyrdxlP-dep_Trfase"/>
</dbReference>
<dbReference type="InterPro" id="IPR015421">
    <property type="entry name" value="PyrdxlP-dep_Trfase_major"/>
</dbReference>
<dbReference type="InterPro" id="IPR015422">
    <property type="entry name" value="PyrdxlP-dep_Trfase_small"/>
</dbReference>
<dbReference type="InterPro" id="IPR018176">
    <property type="entry name" value="Tryptophanase_CS"/>
</dbReference>
<dbReference type="InterPro" id="IPR013441">
    <property type="entry name" value="Tyr_phenol_ly"/>
</dbReference>
<dbReference type="NCBIfam" id="NF009709">
    <property type="entry name" value="PRK13238.1"/>
    <property type="match status" value="1"/>
</dbReference>
<dbReference type="NCBIfam" id="TIGR02618">
    <property type="entry name" value="tyr_phenol_ly"/>
    <property type="match status" value="1"/>
</dbReference>
<dbReference type="PANTHER" id="PTHR32325">
    <property type="entry name" value="BETA-ELIMINATING LYASE-LIKE PROTEIN-RELATED"/>
    <property type="match status" value="1"/>
</dbReference>
<dbReference type="PANTHER" id="PTHR32325:SF4">
    <property type="entry name" value="TRYPTOPHANASE"/>
    <property type="match status" value="1"/>
</dbReference>
<dbReference type="Pfam" id="PF01212">
    <property type="entry name" value="Beta_elim_lyase"/>
    <property type="match status" value="1"/>
</dbReference>
<dbReference type="PIRSF" id="PIRSF001386">
    <property type="entry name" value="Trpase"/>
    <property type="match status" value="1"/>
</dbReference>
<dbReference type="SUPFAM" id="SSF53383">
    <property type="entry name" value="PLP-dependent transferases"/>
    <property type="match status" value="1"/>
</dbReference>
<dbReference type="PROSITE" id="PS00853">
    <property type="entry name" value="BETA_ELIM_LYASE"/>
    <property type="match status" value="1"/>
</dbReference>
<name>TPL_FUSNN</name>
<evidence type="ECO:0000255" key="1">
    <source>
        <dbReference type="HAMAP-Rule" id="MF_00543"/>
    </source>
</evidence>
<comment type="catalytic activity">
    <reaction evidence="1">
        <text>L-tyrosine + H2O = phenol + pyruvate + NH4(+)</text>
        <dbReference type="Rhea" id="RHEA:21704"/>
        <dbReference type="ChEBI" id="CHEBI:15361"/>
        <dbReference type="ChEBI" id="CHEBI:15377"/>
        <dbReference type="ChEBI" id="CHEBI:15882"/>
        <dbReference type="ChEBI" id="CHEBI:28938"/>
        <dbReference type="ChEBI" id="CHEBI:58315"/>
        <dbReference type="EC" id="4.1.99.2"/>
    </reaction>
</comment>
<comment type="cofactor">
    <cofactor evidence="1">
        <name>pyridoxal 5'-phosphate</name>
        <dbReference type="ChEBI" id="CHEBI:597326"/>
    </cofactor>
</comment>
<comment type="subunit">
    <text evidence="1">Homotetramer.</text>
</comment>
<comment type="similarity">
    <text evidence="1">Belongs to the beta-eliminating lyase family.</text>
</comment>
<accession>Q8RHM6</accession>
<organism>
    <name type="scientific">Fusobacterium nucleatum subsp. nucleatum (strain ATCC 25586 / DSM 15643 / BCRC 10681 / CIP 101130 / JCM 8532 / KCTC 2640 / LMG 13131 / VPI 4355)</name>
    <dbReference type="NCBI Taxonomy" id="190304"/>
    <lineage>
        <taxon>Bacteria</taxon>
        <taxon>Fusobacteriati</taxon>
        <taxon>Fusobacteriota</taxon>
        <taxon>Fusobacteriia</taxon>
        <taxon>Fusobacteriales</taxon>
        <taxon>Fusobacteriaceae</taxon>
        <taxon>Fusobacterium</taxon>
    </lineage>
</organism>
<feature type="chain" id="PRO_0000195635" description="Tyrosine phenol-lyase">
    <location>
        <begin position="1"/>
        <end position="460"/>
    </location>
</feature>
<feature type="modified residue" description="N6-(pyridoxal phosphate)lysine" evidence="1">
    <location>
        <position position="260"/>
    </location>
</feature>
<sequence>MRFEDYPAEPFRIKSVETVKMIDKAAREEVIKKAGYNTFLINSEDVYIDLLTDSGTNAMSDKQWGGLMQGDEAYAGSRNFFHLEETVKEIFGFKHIVPTHQGRGAENILSQIAIKPGQYVPGNMYFTTTRYHQERNGGIFKDIIRDEAHDATLNVPFKGDIDLNKLQKLIDEVGAENIAYVCLAVTVNLAGGQPVSMKNMKAVRELTKKHGIKVFYDATRCVENAYFIKEQEEGYQDKTIKEIVHEMFSYADGCTMSGKKDCLVNIGGFLCMNDEDLFLAAKEIVVVYEGMPSYGGLAGRDMEAMAIGLRESLQYEYIRHRILQVRYLGEKLKEAGVPILEPVGGHAVFLDARRFCPHIPQEEFPAQALAAAIYVECGVRTMERGIISAGRDVKTGENHKPKLETVRVTIPRRVYTYKHMDVVAEGIIKLYKHKEDIKPLEFVYEPKQLRFFTARFGIKK</sequence>
<proteinExistence type="inferred from homology"/>
<reference key="1">
    <citation type="journal article" date="2002" name="J. Bacteriol.">
        <title>Genome sequence and analysis of the oral bacterium Fusobacterium nucleatum strain ATCC 25586.</title>
        <authorList>
            <person name="Kapatral V."/>
            <person name="Anderson I."/>
            <person name="Ivanova N."/>
            <person name="Reznik G."/>
            <person name="Los T."/>
            <person name="Lykidis A."/>
            <person name="Bhattacharyya A."/>
            <person name="Bartman A."/>
            <person name="Gardner W."/>
            <person name="Grechkin G."/>
            <person name="Zhu L."/>
            <person name="Vasieva O."/>
            <person name="Chu L."/>
            <person name="Kogan Y."/>
            <person name="Chaga O."/>
            <person name="Goltsman E."/>
            <person name="Bernal A."/>
            <person name="Larsen N."/>
            <person name="D'Souza M."/>
            <person name="Walunas T."/>
            <person name="Pusch G."/>
            <person name="Haselkorn R."/>
            <person name="Fonstein M."/>
            <person name="Kyrpides N.C."/>
            <person name="Overbeek R."/>
        </authorList>
    </citation>
    <scope>NUCLEOTIDE SEQUENCE [LARGE SCALE GENOMIC DNA]</scope>
    <source>
        <strain>ATCC 25586 / DSM 15643 / BCRC 10681 / CIP 101130 / JCM 8532 / KCTC 2640 / LMG 13131 / VPI 4355</strain>
    </source>
</reference>
<keyword id="KW-0456">Lyase</keyword>
<keyword id="KW-0663">Pyridoxal phosphate</keyword>
<keyword id="KW-1185">Reference proteome</keyword>